<comment type="function">
    <text evidence="1">Central component of the receptor complex responsible for the recognition and translocation of cytosolically synthesized mitochondrial preproteins. Together with tom22 functions as the transit peptide receptor at the surface of the mitochondrion outer membrane and facilitates the movement of preproteins into the tom40 translocation pore (By similarity).</text>
</comment>
<comment type="subunit">
    <text evidence="1">Forms part of the preprotein translocase complex of the outer mitochondrial membrane (TOM complex). Interacts with tom22 (By similarity).</text>
</comment>
<comment type="subcellular location">
    <subcellularLocation>
        <location evidence="2">Mitochondrion outer membrane</location>
        <topology evidence="3">Single-pass membrane protein</topology>
    </subcellularLocation>
</comment>
<comment type="similarity">
    <text evidence="6">Belongs to the Tom20 family.</text>
</comment>
<feature type="chain" id="PRO_0000317744" description="Mitochondrial import receptor subunit TOM20 homolog B">
    <location>
        <begin position="1"/>
        <end position="146"/>
    </location>
</feature>
<feature type="topological domain" description="Mitochondrial intermembrane" evidence="3">
    <location>
        <begin position="1"/>
        <end position="5"/>
    </location>
</feature>
<feature type="transmembrane region" description="Helical" evidence="3">
    <location>
        <begin position="6"/>
        <end position="25"/>
    </location>
</feature>
<feature type="topological domain" description="Cytoplasmic" evidence="3">
    <location>
        <begin position="26"/>
        <end position="146"/>
    </location>
</feature>
<feature type="region of interest" description="Disordered" evidence="4">
    <location>
        <begin position="37"/>
        <end position="56"/>
    </location>
</feature>
<feature type="compositionally biased region" description="Basic residues" evidence="4">
    <location>
        <begin position="37"/>
        <end position="47"/>
    </location>
</feature>
<feature type="modified residue" description="Phosphoserine" evidence="5">
    <location>
        <position position="141"/>
    </location>
</feature>
<reference key="1">
    <citation type="submission" date="2004-07" db="EMBL/GenBank/DDBJ databases">
        <authorList>
            <consortium name="NIH - Zebrafish Gene Collection (ZGC) project"/>
        </authorList>
    </citation>
    <scope>NUCLEOTIDE SEQUENCE [LARGE SCALE MRNA]</scope>
    <source>
        <tissue>Liver</tissue>
    </source>
</reference>
<reference key="2">
    <citation type="journal article" date="2008" name="J. Proteome Res.">
        <title>Online automated in vivo zebrafish phosphoproteomics: from large-scale analysis down to a single embryo.</title>
        <authorList>
            <person name="Lemeer S."/>
            <person name="Pinkse M.W.H."/>
            <person name="Mohammed S."/>
            <person name="van Breukelen B."/>
            <person name="den Hertog J."/>
            <person name="Slijper M."/>
            <person name="Heck A.J.R."/>
        </authorList>
    </citation>
    <scope>PHOSPHORYLATION [LARGE SCALE ANALYSIS] AT SER-141</scope>
    <scope>IDENTIFICATION BY MASS SPECTROMETRY</scope>
    <source>
        <tissue>Embryo</tissue>
    </source>
</reference>
<accession>Q6DH66</accession>
<organism>
    <name type="scientific">Danio rerio</name>
    <name type="common">Zebrafish</name>
    <name type="synonym">Brachydanio rerio</name>
    <dbReference type="NCBI Taxonomy" id="7955"/>
    <lineage>
        <taxon>Eukaryota</taxon>
        <taxon>Metazoa</taxon>
        <taxon>Chordata</taxon>
        <taxon>Craniata</taxon>
        <taxon>Vertebrata</taxon>
        <taxon>Euteleostomi</taxon>
        <taxon>Actinopterygii</taxon>
        <taxon>Neopterygii</taxon>
        <taxon>Teleostei</taxon>
        <taxon>Ostariophysi</taxon>
        <taxon>Cypriniformes</taxon>
        <taxon>Danionidae</taxon>
        <taxon>Danioninae</taxon>
        <taxon>Danio</taxon>
    </lineage>
</organism>
<name>TM20B_DANRE</name>
<sequence length="146" mass="16292">MMGGSSSRIAAGLGAALFVGYCIYFDRKRRSDPNYKNKLRERRKKQKAAQEKAGLSRLPDLKDAEAVQKFFLEEIQLGEELLAQGDYEKGVDHLTNAIAVCGQPQQLLQVLQQTLPPPVFQMLLTKLPTISQRIVSAQSISDDDIE</sequence>
<evidence type="ECO:0000250" key="1"/>
<evidence type="ECO:0000250" key="2">
    <source>
        <dbReference type="UniProtKB" id="Q15388"/>
    </source>
</evidence>
<evidence type="ECO:0000255" key="3"/>
<evidence type="ECO:0000256" key="4">
    <source>
        <dbReference type="SAM" id="MobiDB-lite"/>
    </source>
</evidence>
<evidence type="ECO:0000269" key="5">
    <source>
    </source>
</evidence>
<evidence type="ECO:0000305" key="6"/>
<dbReference type="EMBL" id="BC076116">
    <property type="protein sequence ID" value="AAH76116.1"/>
    <property type="molecule type" value="mRNA"/>
</dbReference>
<dbReference type="RefSeq" id="NP_001002698.1">
    <property type="nucleotide sequence ID" value="NM_001002698.1"/>
</dbReference>
<dbReference type="SMR" id="Q6DH66"/>
<dbReference type="BioGRID" id="92128">
    <property type="interactions" value="1"/>
</dbReference>
<dbReference type="FunCoup" id="Q6DH66">
    <property type="interactions" value="1201"/>
</dbReference>
<dbReference type="STRING" id="7955.ENSDARP00000130577"/>
<dbReference type="iPTMnet" id="Q6DH66"/>
<dbReference type="Ensembl" id="ENSDART00000158939">
    <property type="protein sequence ID" value="ENSDARP00000130577"/>
    <property type="gene ID" value="ENSDARG00000103566"/>
</dbReference>
<dbReference type="GeneID" id="436971"/>
<dbReference type="KEGG" id="dre:436971"/>
<dbReference type="AGR" id="ZFIN:ZDB-GENE-040718-451"/>
<dbReference type="CTD" id="436971"/>
<dbReference type="ZFIN" id="ZDB-GENE-040718-451">
    <property type="gene designation" value="tomm20b"/>
</dbReference>
<dbReference type="HOGENOM" id="CLU_100000_1_1_1"/>
<dbReference type="InParanoid" id="Q6DH66"/>
<dbReference type="OMA" id="DMIAYDG"/>
<dbReference type="OrthoDB" id="2154253at2759"/>
<dbReference type="PhylomeDB" id="Q6DH66"/>
<dbReference type="TreeFam" id="TF106200"/>
<dbReference type="Reactome" id="R-DRE-5205685">
    <property type="pathway name" value="PINK1-PRKN Mediated Mitophagy"/>
</dbReference>
<dbReference type="Reactome" id="R-DRE-5689880">
    <property type="pathway name" value="Ub-specific processing proteases"/>
</dbReference>
<dbReference type="PRO" id="PR:Q6DH66"/>
<dbReference type="Proteomes" id="UP000000437">
    <property type="component" value="Chromosome 11"/>
</dbReference>
<dbReference type="Bgee" id="ENSDARG00000103566">
    <property type="expression patterns" value="Expressed in muscle tissue and 27 other cell types or tissues"/>
</dbReference>
<dbReference type="ExpressionAtlas" id="Q6DH66">
    <property type="expression patterns" value="baseline"/>
</dbReference>
<dbReference type="GO" id="GO:0005742">
    <property type="term" value="C:mitochondrial outer membrane translocase complex"/>
    <property type="evidence" value="ECO:0000318"/>
    <property type="project" value="GO_Central"/>
</dbReference>
<dbReference type="GO" id="GO:0030943">
    <property type="term" value="F:mitochondrion targeting sequence binding"/>
    <property type="evidence" value="ECO:0000318"/>
    <property type="project" value="GO_Central"/>
</dbReference>
<dbReference type="GO" id="GO:0006886">
    <property type="term" value="P:intracellular protein transport"/>
    <property type="evidence" value="ECO:0007669"/>
    <property type="project" value="InterPro"/>
</dbReference>
<dbReference type="GO" id="GO:0030150">
    <property type="term" value="P:protein import into mitochondrial matrix"/>
    <property type="evidence" value="ECO:0000318"/>
    <property type="project" value="GO_Central"/>
</dbReference>
<dbReference type="GO" id="GO:0016031">
    <property type="term" value="P:tRNA import into mitochondrion"/>
    <property type="evidence" value="ECO:0000318"/>
    <property type="project" value="GO_Central"/>
</dbReference>
<dbReference type="FunFam" id="1.20.960.10:FF:000001">
    <property type="entry name" value="Mitochondrial import receptor subunit TOM20 homolog"/>
    <property type="match status" value="1"/>
</dbReference>
<dbReference type="Gene3D" id="1.20.960.10">
    <property type="entry name" value="Mitochondrial outer membrane translocase complex, subunit Tom20 domain"/>
    <property type="match status" value="1"/>
</dbReference>
<dbReference type="InterPro" id="IPR002056">
    <property type="entry name" value="MAS20"/>
</dbReference>
<dbReference type="InterPro" id="IPR022422">
    <property type="entry name" value="MAS20_rcpt_metazoan"/>
</dbReference>
<dbReference type="InterPro" id="IPR023392">
    <property type="entry name" value="Tom20_dom_sf"/>
</dbReference>
<dbReference type="PANTHER" id="PTHR12430">
    <property type="entry name" value="MITOCHONDRIAL IMPORT RECEPTOR SUBUNIT TOM20"/>
    <property type="match status" value="1"/>
</dbReference>
<dbReference type="PANTHER" id="PTHR12430:SF0">
    <property type="entry name" value="TRANSLOCASE OF OUTER MITOCHONDRIAL MEMBRANE 20"/>
    <property type="match status" value="1"/>
</dbReference>
<dbReference type="Pfam" id="PF02064">
    <property type="entry name" value="MAS20"/>
    <property type="match status" value="1"/>
</dbReference>
<dbReference type="PIRSF" id="PIRSF037707">
    <property type="entry name" value="MAS20_rcpt"/>
    <property type="match status" value="1"/>
</dbReference>
<dbReference type="PRINTS" id="PR01989">
    <property type="entry name" value="EUOM20RECPTR"/>
</dbReference>
<dbReference type="PRINTS" id="PR00351">
    <property type="entry name" value="OM20RECEPTOR"/>
</dbReference>
<dbReference type="SUPFAM" id="SSF47157">
    <property type="entry name" value="Mitochondrial import receptor subunit Tom20"/>
    <property type="match status" value="1"/>
</dbReference>
<gene>
    <name type="primary">tomm20b</name>
    <name type="ORF">zgc:92628</name>
</gene>
<proteinExistence type="evidence at protein level"/>
<protein>
    <recommendedName>
        <fullName>Mitochondrial import receptor subunit TOM20 homolog B</fullName>
    </recommendedName>
    <alternativeName>
        <fullName>Mitochondrial 20 kDa outer membrane protein B</fullName>
    </alternativeName>
    <alternativeName>
        <fullName>Outer mitochondrial membrane receptor Tom20-B</fullName>
    </alternativeName>
</protein>
<keyword id="KW-0472">Membrane</keyword>
<keyword id="KW-0496">Mitochondrion</keyword>
<keyword id="KW-1000">Mitochondrion outer membrane</keyword>
<keyword id="KW-0597">Phosphoprotein</keyword>
<keyword id="KW-0653">Protein transport</keyword>
<keyword id="KW-1185">Reference proteome</keyword>
<keyword id="KW-0812">Transmembrane</keyword>
<keyword id="KW-1133">Transmembrane helix</keyword>
<keyword id="KW-0813">Transport</keyword>